<proteinExistence type="inferred from homology"/>
<accession>Q927L8</accession>
<keyword id="KW-0687">Ribonucleoprotein</keyword>
<keyword id="KW-0689">Ribosomal protein</keyword>
<keyword id="KW-0694">RNA-binding</keyword>
<keyword id="KW-0699">rRNA-binding</keyword>
<sequence length="103" mass="11193">MHVKKGDKVKVITGKDKGKSGKVLAAFPKKDRVLIEGINMVKKHTKPSNINPQGGILNVEAPIHVSNVMLIDPKTGEPTRVGYEVKGDKKVRVAKKSGEVIDK</sequence>
<gene>
    <name evidence="1" type="primary">rplX</name>
    <name type="ordered locus">lin2770</name>
</gene>
<comment type="function">
    <text evidence="1">One of two assembly initiator proteins, it binds directly to the 5'-end of the 23S rRNA, where it nucleates assembly of the 50S subunit.</text>
</comment>
<comment type="function">
    <text evidence="1">One of the proteins that surrounds the polypeptide exit tunnel on the outside of the subunit.</text>
</comment>
<comment type="subunit">
    <text evidence="1">Part of the 50S ribosomal subunit.</text>
</comment>
<comment type="similarity">
    <text evidence="1">Belongs to the universal ribosomal protein uL24 family.</text>
</comment>
<protein>
    <recommendedName>
        <fullName evidence="1">Large ribosomal subunit protein uL24</fullName>
    </recommendedName>
    <alternativeName>
        <fullName evidence="2">50S ribosomal protein L24</fullName>
    </alternativeName>
</protein>
<feature type="chain" id="PRO_0000130671" description="Large ribosomal subunit protein uL24">
    <location>
        <begin position="1"/>
        <end position="103"/>
    </location>
</feature>
<dbReference type="EMBL" id="AL596173">
    <property type="protein sequence ID" value="CAC97996.1"/>
    <property type="molecule type" value="Genomic_DNA"/>
</dbReference>
<dbReference type="PIR" id="AD1778">
    <property type="entry name" value="AD1778"/>
</dbReference>
<dbReference type="RefSeq" id="WP_003720939.1">
    <property type="nucleotide sequence ID" value="NC_003212.1"/>
</dbReference>
<dbReference type="SMR" id="Q927L8"/>
<dbReference type="STRING" id="272626.gene:17567157"/>
<dbReference type="GeneID" id="93236043"/>
<dbReference type="KEGG" id="lin:rplX"/>
<dbReference type="eggNOG" id="COG0198">
    <property type="taxonomic scope" value="Bacteria"/>
</dbReference>
<dbReference type="HOGENOM" id="CLU_093315_2_0_9"/>
<dbReference type="OrthoDB" id="9807419at2"/>
<dbReference type="Proteomes" id="UP000002513">
    <property type="component" value="Chromosome"/>
</dbReference>
<dbReference type="GO" id="GO:1990904">
    <property type="term" value="C:ribonucleoprotein complex"/>
    <property type="evidence" value="ECO:0007669"/>
    <property type="project" value="UniProtKB-KW"/>
</dbReference>
<dbReference type="GO" id="GO:0005840">
    <property type="term" value="C:ribosome"/>
    <property type="evidence" value="ECO:0007669"/>
    <property type="project" value="UniProtKB-KW"/>
</dbReference>
<dbReference type="GO" id="GO:0019843">
    <property type="term" value="F:rRNA binding"/>
    <property type="evidence" value="ECO:0007669"/>
    <property type="project" value="UniProtKB-UniRule"/>
</dbReference>
<dbReference type="GO" id="GO:0003735">
    <property type="term" value="F:structural constituent of ribosome"/>
    <property type="evidence" value="ECO:0007669"/>
    <property type="project" value="InterPro"/>
</dbReference>
<dbReference type="GO" id="GO:0006412">
    <property type="term" value="P:translation"/>
    <property type="evidence" value="ECO:0007669"/>
    <property type="project" value="UniProtKB-UniRule"/>
</dbReference>
<dbReference type="CDD" id="cd06089">
    <property type="entry name" value="KOW_RPL26"/>
    <property type="match status" value="1"/>
</dbReference>
<dbReference type="FunFam" id="2.30.30.30:FF:000004">
    <property type="entry name" value="50S ribosomal protein L24"/>
    <property type="match status" value="1"/>
</dbReference>
<dbReference type="Gene3D" id="2.30.30.30">
    <property type="match status" value="1"/>
</dbReference>
<dbReference type="HAMAP" id="MF_01326_B">
    <property type="entry name" value="Ribosomal_uL24_B"/>
    <property type="match status" value="1"/>
</dbReference>
<dbReference type="InterPro" id="IPR005824">
    <property type="entry name" value="KOW"/>
</dbReference>
<dbReference type="InterPro" id="IPR014722">
    <property type="entry name" value="Rib_uL2_dom2"/>
</dbReference>
<dbReference type="InterPro" id="IPR003256">
    <property type="entry name" value="Ribosomal_uL24"/>
</dbReference>
<dbReference type="InterPro" id="IPR005825">
    <property type="entry name" value="Ribosomal_uL24_CS"/>
</dbReference>
<dbReference type="InterPro" id="IPR041988">
    <property type="entry name" value="Ribosomal_uL24_KOW"/>
</dbReference>
<dbReference type="InterPro" id="IPR008991">
    <property type="entry name" value="Translation_prot_SH3-like_sf"/>
</dbReference>
<dbReference type="NCBIfam" id="TIGR01079">
    <property type="entry name" value="rplX_bact"/>
    <property type="match status" value="1"/>
</dbReference>
<dbReference type="PANTHER" id="PTHR12903">
    <property type="entry name" value="MITOCHONDRIAL RIBOSOMAL PROTEIN L24"/>
    <property type="match status" value="1"/>
</dbReference>
<dbReference type="Pfam" id="PF00467">
    <property type="entry name" value="KOW"/>
    <property type="match status" value="1"/>
</dbReference>
<dbReference type="Pfam" id="PF17136">
    <property type="entry name" value="ribosomal_L24"/>
    <property type="match status" value="1"/>
</dbReference>
<dbReference type="SMART" id="SM00739">
    <property type="entry name" value="KOW"/>
    <property type="match status" value="1"/>
</dbReference>
<dbReference type="SUPFAM" id="SSF50104">
    <property type="entry name" value="Translation proteins SH3-like domain"/>
    <property type="match status" value="1"/>
</dbReference>
<dbReference type="PROSITE" id="PS01108">
    <property type="entry name" value="RIBOSOMAL_L24"/>
    <property type="match status" value="1"/>
</dbReference>
<name>RL24_LISIN</name>
<organism>
    <name type="scientific">Listeria innocua serovar 6a (strain ATCC BAA-680 / CLIP 11262)</name>
    <dbReference type="NCBI Taxonomy" id="272626"/>
    <lineage>
        <taxon>Bacteria</taxon>
        <taxon>Bacillati</taxon>
        <taxon>Bacillota</taxon>
        <taxon>Bacilli</taxon>
        <taxon>Bacillales</taxon>
        <taxon>Listeriaceae</taxon>
        <taxon>Listeria</taxon>
    </lineage>
</organism>
<reference key="1">
    <citation type="journal article" date="2001" name="Science">
        <title>Comparative genomics of Listeria species.</title>
        <authorList>
            <person name="Glaser P."/>
            <person name="Frangeul L."/>
            <person name="Buchrieser C."/>
            <person name="Rusniok C."/>
            <person name="Amend A."/>
            <person name="Baquero F."/>
            <person name="Berche P."/>
            <person name="Bloecker H."/>
            <person name="Brandt P."/>
            <person name="Chakraborty T."/>
            <person name="Charbit A."/>
            <person name="Chetouani F."/>
            <person name="Couve E."/>
            <person name="de Daruvar A."/>
            <person name="Dehoux P."/>
            <person name="Domann E."/>
            <person name="Dominguez-Bernal G."/>
            <person name="Duchaud E."/>
            <person name="Durant L."/>
            <person name="Dussurget O."/>
            <person name="Entian K.-D."/>
            <person name="Fsihi H."/>
            <person name="Garcia-del Portillo F."/>
            <person name="Garrido P."/>
            <person name="Gautier L."/>
            <person name="Goebel W."/>
            <person name="Gomez-Lopez N."/>
            <person name="Hain T."/>
            <person name="Hauf J."/>
            <person name="Jackson D."/>
            <person name="Jones L.-M."/>
            <person name="Kaerst U."/>
            <person name="Kreft J."/>
            <person name="Kuhn M."/>
            <person name="Kunst F."/>
            <person name="Kurapkat G."/>
            <person name="Madueno E."/>
            <person name="Maitournam A."/>
            <person name="Mata Vicente J."/>
            <person name="Ng E."/>
            <person name="Nedjari H."/>
            <person name="Nordsiek G."/>
            <person name="Novella S."/>
            <person name="de Pablos B."/>
            <person name="Perez-Diaz J.-C."/>
            <person name="Purcell R."/>
            <person name="Remmel B."/>
            <person name="Rose M."/>
            <person name="Schlueter T."/>
            <person name="Simoes N."/>
            <person name="Tierrez A."/>
            <person name="Vazquez-Boland J.-A."/>
            <person name="Voss H."/>
            <person name="Wehland J."/>
            <person name="Cossart P."/>
        </authorList>
    </citation>
    <scope>NUCLEOTIDE SEQUENCE [LARGE SCALE GENOMIC DNA]</scope>
    <source>
        <strain>ATCC BAA-680 / CLIP 11262</strain>
    </source>
</reference>
<evidence type="ECO:0000255" key="1">
    <source>
        <dbReference type="HAMAP-Rule" id="MF_01326"/>
    </source>
</evidence>
<evidence type="ECO:0000305" key="2"/>